<accession>Q6NV12</accession>
<gene>
    <name type="primary">slc20a1a</name>
    <name type="ORF">zgc:85672</name>
</gene>
<organism>
    <name type="scientific">Danio rerio</name>
    <name type="common">Zebrafish</name>
    <name type="synonym">Brachydanio rerio</name>
    <dbReference type="NCBI Taxonomy" id="7955"/>
    <lineage>
        <taxon>Eukaryota</taxon>
        <taxon>Metazoa</taxon>
        <taxon>Chordata</taxon>
        <taxon>Craniata</taxon>
        <taxon>Vertebrata</taxon>
        <taxon>Euteleostomi</taxon>
        <taxon>Actinopterygii</taxon>
        <taxon>Neopterygii</taxon>
        <taxon>Teleostei</taxon>
        <taxon>Ostariophysi</taxon>
        <taxon>Cypriniformes</taxon>
        <taxon>Danionidae</taxon>
        <taxon>Danioninae</taxon>
        <taxon>Danio</taxon>
    </lineage>
</organism>
<protein>
    <recommendedName>
        <fullName>Sodium-dependent phosphate transporter 1-A</fullName>
    </recommendedName>
    <alternativeName>
        <fullName>Solute carrier family 20 member 1-A</fullName>
    </alternativeName>
</protein>
<comment type="function">
    <text evidence="1">Sodium-phosphate symporter which plays a fundamental housekeeping role in phosphate transport.</text>
</comment>
<comment type="subcellular location">
    <subcellularLocation>
        <location evidence="4">Membrane</location>
        <topology evidence="4">Multi-pass membrane protein</topology>
    </subcellularLocation>
</comment>
<comment type="similarity">
    <text evidence="4">Belongs to the inorganic phosphate transporter (PiT) (TC 2.A.20) family.</text>
</comment>
<keyword id="KW-0472">Membrane</keyword>
<keyword id="KW-0592">Phosphate transport</keyword>
<keyword id="KW-1185">Reference proteome</keyword>
<keyword id="KW-0769">Symport</keyword>
<keyword id="KW-0812">Transmembrane</keyword>
<keyword id="KW-1133">Transmembrane helix</keyword>
<keyword id="KW-0813">Transport</keyword>
<name>S20AA_DANRE</name>
<proteinExistence type="evidence at transcript level"/>
<dbReference type="EMBL" id="BC068354">
    <property type="protein sequence ID" value="AAH68354.1"/>
    <property type="molecule type" value="mRNA"/>
</dbReference>
<dbReference type="RefSeq" id="NP_998344.1">
    <property type="nucleotide sequence ID" value="NM_213179.1"/>
</dbReference>
<dbReference type="SMR" id="Q6NV12"/>
<dbReference type="FunCoup" id="Q6NV12">
    <property type="interactions" value="286"/>
</dbReference>
<dbReference type="STRING" id="7955.ENSDARP00000005218"/>
<dbReference type="PaxDb" id="7955-ENSDARP00000005218"/>
<dbReference type="GeneID" id="406458"/>
<dbReference type="KEGG" id="dre:406458"/>
<dbReference type="AGR" id="ZFIN:ZDB-GENE-040426-2217"/>
<dbReference type="CTD" id="406458"/>
<dbReference type="ZFIN" id="ZDB-GENE-040426-2217">
    <property type="gene designation" value="slc20a1a"/>
</dbReference>
<dbReference type="eggNOG" id="KOG2493">
    <property type="taxonomic scope" value="Eukaryota"/>
</dbReference>
<dbReference type="InParanoid" id="Q6NV12"/>
<dbReference type="OrthoDB" id="260807at2759"/>
<dbReference type="PhylomeDB" id="Q6NV12"/>
<dbReference type="PRO" id="PR:Q6NV12"/>
<dbReference type="Proteomes" id="UP000000437">
    <property type="component" value="Alternate scaffold 8"/>
</dbReference>
<dbReference type="Proteomes" id="UP000000437">
    <property type="component" value="Chromosome 8"/>
</dbReference>
<dbReference type="GO" id="GO:0016020">
    <property type="term" value="C:membrane"/>
    <property type="evidence" value="ECO:0007669"/>
    <property type="project" value="UniProtKB-SubCell"/>
</dbReference>
<dbReference type="GO" id="GO:0005315">
    <property type="term" value="F:phosphate transmembrane transporter activity"/>
    <property type="evidence" value="ECO:0000318"/>
    <property type="project" value="GO_Central"/>
</dbReference>
<dbReference type="GO" id="GO:0015293">
    <property type="term" value="F:symporter activity"/>
    <property type="evidence" value="ECO:0007669"/>
    <property type="project" value="UniProtKB-KW"/>
</dbReference>
<dbReference type="GO" id="GO:0035844">
    <property type="term" value="P:cloaca development"/>
    <property type="evidence" value="ECO:0000315"/>
    <property type="project" value="ZFIN"/>
</dbReference>
<dbReference type="GO" id="GO:0035435">
    <property type="term" value="P:phosphate ion transmembrane transport"/>
    <property type="evidence" value="ECO:0000318"/>
    <property type="project" value="GO_Central"/>
</dbReference>
<dbReference type="InterPro" id="IPR001204">
    <property type="entry name" value="Phos_transporter"/>
</dbReference>
<dbReference type="PANTHER" id="PTHR11101">
    <property type="entry name" value="PHOSPHATE TRANSPORTER"/>
    <property type="match status" value="1"/>
</dbReference>
<dbReference type="PANTHER" id="PTHR11101:SF81">
    <property type="entry name" value="SODIUM-DEPENDENT PHOSPHATE TRANSPORTER 1-A"/>
    <property type="match status" value="1"/>
</dbReference>
<dbReference type="Pfam" id="PF01384">
    <property type="entry name" value="PHO4"/>
    <property type="match status" value="1"/>
</dbReference>
<sequence length="652" mass="69935">MESTTLASLAAVSVLAAGAQTDMSDVLWLLILGFVIAFILAFSVGANDVANSFGTAVGSGVVTLRQACILATIFETVGAMLLGAKVSETIRSGIIDVHMYNGSEAVLMAGSISAMFGSAVWQLAASFLKLPISGTHCIVGATIGFSMVARGHQGVKWLELLRIVASWFLSPLLSGIMSAVLFYFVRKFILNKDDPVPNGLRALPVFYAVTMGINLFSIMFTGAPMLGFDRIPWWGTLLISLGCAILTALVVWFIVCPRLKKKMQSKCLGPNIADTSGTQLVEKKPSSNGLMDHHPGPPRNYSPVPQTPPADSNKVAFDIGGSAETDLDKKEFDTKDQDCTHALNGSGGIVIPDLSGNQFHTVHKDSGIYKDLLHKLHLAKVGECIGEPVEKPIRRNNSYTSYTMAIYGIHGSLKDGEGGSRTGLDGEKRRSRYDSYNSYCTAVADGEAALEDAALAVGMEDEALREDVLEEDIDELEIDKPEVSTLFQFLQILTACFGSFAHGGNDVSNAIGPLVALWLIYDSASVAPSAPTPIWLLLYGGVGICTGLWIWGRRVIQTMGKDLTPITPSSGFSIELASAITVVVASNIGLPVSTTHCKVGSVVSVGWLRSRKAVDWHLFRNIFIAWFVTVPISGLISAAIMALFYYVILPLT</sequence>
<evidence type="ECO:0000250" key="1"/>
<evidence type="ECO:0000255" key="2"/>
<evidence type="ECO:0000256" key="3">
    <source>
        <dbReference type="SAM" id="MobiDB-lite"/>
    </source>
</evidence>
<evidence type="ECO:0000305" key="4"/>
<feature type="chain" id="PRO_0000080776" description="Sodium-dependent phosphate transporter 1-A">
    <location>
        <begin position="1"/>
        <end position="652"/>
    </location>
</feature>
<feature type="topological domain" description="Cytoplasmic" evidence="2">
    <location>
        <begin position="1"/>
        <end position="25"/>
    </location>
</feature>
<feature type="transmembrane region" description="Helical" evidence="2">
    <location>
        <begin position="26"/>
        <end position="46"/>
    </location>
</feature>
<feature type="topological domain" description="Extracellular" evidence="2">
    <location>
        <begin position="47"/>
        <end position="66"/>
    </location>
</feature>
<feature type="transmembrane region" description="Helical" evidence="2">
    <location>
        <begin position="67"/>
        <end position="87"/>
    </location>
</feature>
<feature type="topological domain" description="Cytoplasmic" evidence="2">
    <location>
        <begin position="88"/>
        <end position="104"/>
    </location>
</feature>
<feature type="transmembrane region" description="Helical" evidence="2">
    <location>
        <begin position="105"/>
        <end position="125"/>
    </location>
</feature>
<feature type="topological domain" description="Extracellular" evidence="2">
    <location>
        <begin position="126"/>
        <end position="162"/>
    </location>
</feature>
<feature type="transmembrane region" description="Helical" evidence="2">
    <location>
        <begin position="163"/>
        <end position="183"/>
    </location>
</feature>
<feature type="topological domain" description="Cytoplasmic" evidence="2">
    <location>
        <begin position="184"/>
        <end position="201"/>
    </location>
</feature>
<feature type="transmembrane region" description="Helical" evidence="2">
    <location>
        <begin position="202"/>
        <end position="222"/>
    </location>
</feature>
<feature type="topological domain" description="Extracellular" evidence="2">
    <location>
        <begin position="223"/>
        <end position="234"/>
    </location>
</feature>
<feature type="transmembrane region" description="Helical" evidence="2">
    <location>
        <begin position="235"/>
        <end position="255"/>
    </location>
</feature>
<feature type="topological domain" description="Cytoplasmic" evidence="2">
    <location>
        <begin position="256"/>
        <end position="482"/>
    </location>
</feature>
<feature type="transmembrane region" description="Helical" evidence="2">
    <location>
        <begin position="483"/>
        <end position="503"/>
    </location>
</feature>
<feature type="topological domain" description="Extracellular" evidence="2">
    <location>
        <begin position="504"/>
        <end position="531"/>
    </location>
</feature>
<feature type="transmembrane region" description="Helical" evidence="2">
    <location>
        <begin position="532"/>
        <end position="552"/>
    </location>
</feature>
<feature type="topological domain" description="Cytoplasmic" evidence="2">
    <location>
        <begin position="553"/>
        <end position="571"/>
    </location>
</feature>
<feature type="transmembrane region" description="Helical" evidence="2">
    <location>
        <begin position="572"/>
        <end position="592"/>
    </location>
</feature>
<feature type="topological domain" description="Extracellular" evidence="2">
    <location>
        <begin position="593"/>
        <end position="621"/>
    </location>
</feature>
<feature type="transmembrane region" description="Helical" evidence="2">
    <location>
        <begin position="622"/>
        <end position="642"/>
    </location>
</feature>
<feature type="topological domain" description="Cytoplasmic" evidence="2">
    <location>
        <begin position="643"/>
        <end position="652"/>
    </location>
</feature>
<feature type="region of interest" description="Disordered" evidence="3">
    <location>
        <begin position="278"/>
        <end position="308"/>
    </location>
</feature>
<feature type="compositionally biased region" description="Basic and acidic residues" evidence="3">
    <location>
        <begin position="281"/>
        <end position="295"/>
    </location>
</feature>
<feature type="compositionally biased region" description="Pro residues" evidence="3">
    <location>
        <begin position="297"/>
        <end position="308"/>
    </location>
</feature>
<reference key="1">
    <citation type="submission" date="2004-04" db="EMBL/GenBank/DDBJ databases">
        <authorList>
            <consortium name="NIH - Zebrafish Gene Collection (ZGC) project"/>
        </authorList>
    </citation>
    <scope>NUCLEOTIDE SEQUENCE [LARGE SCALE MRNA]</scope>
    <source>
        <tissue>Kidney</tissue>
    </source>
</reference>